<comment type="function">
    <text evidence="1">Metalloprotease.</text>
</comment>
<comment type="cofactor">
    <cofactor evidence="5">
        <name>Zn(2+)</name>
        <dbReference type="ChEBI" id="CHEBI:29105"/>
    </cofactor>
    <text evidence="5">Binds 1 zinc ion per subunit.</text>
</comment>
<comment type="subcellular location">
    <subcellularLocation>
        <location evidence="6">Secreted</location>
    </subcellularLocation>
</comment>
<proteinExistence type="evidence at transcript level"/>
<evidence type="ECO:0000250" key="1">
    <source>
        <dbReference type="UniProtKB" id="A8Q2D1"/>
    </source>
</evidence>
<evidence type="ECO:0000250" key="2">
    <source>
        <dbReference type="UniProtKB" id="P13497"/>
    </source>
</evidence>
<evidence type="ECO:0000255" key="3"/>
<evidence type="ECO:0000255" key="4">
    <source>
        <dbReference type="PROSITE-ProRule" id="PRU00059"/>
    </source>
</evidence>
<evidence type="ECO:0000255" key="5">
    <source>
        <dbReference type="PROSITE-ProRule" id="PRU01211"/>
    </source>
</evidence>
<evidence type="ECO:0000305" key="6"/>
<dbReference type="EC" id="3.4.24.-" evidence="1"/>
<dbReference type="EMBL" id="FO080690">
    <property type="protein sequence ID" value="CCD65842.1"/>
    <property type="molecule type" value="Genomic_DNA"/>
</dbReference>
<dbReference type="EMBL" id="AJ561218">
    <property type="protein sequence ID" value="CAD99218.1"/>
    <property type="molecule type" value="mRNA"/>
</dbReference>
<dbReference type="PIR" id="T16493">
    <property type="entry name" value="T16493"/>
</dbReference>
<dbReference type="RefSeq" id="NP_494953.3">
    <property type="nucleotide sequence ID" value="NM_062552.5"/>
</dbReference>
<dbReference type="SMR" id="Q20958"/>
<dbReference type="FunCoup" id="Q20958">
    <property type="interactions" value="3"/>
</dbReference>
<dbReference type="STRING" id="6239.F58A6.4.1"/>
<dbReference type="MEROPS" id="M12.A29"/>
<dbReference type="GlyCosmos" id="Q20958">
    <property type="glycosylation" value="5 sites, No reported glycans"/>
</dbReference>
<dbReference type="PaxDb" id="6239-F58A6.4"/>
<dbReference type="EnsemblMetazoa" id="F58A6.4.1">
    <property type="protein sequence ID" value="F58A6.4.1"/>
    <property type="gene ID" value="WBGene00003547"/>
</dbReference>
<dbReference type="GeneID" id="186488"/>
<dbReference type="KEGG" id="cel:CELE_F58A6.4"/>
<dbReference type="UCSC" id="F58A6.4">
    <property type="organism name" value="c. elegans"/>
</dbReference>
<dbReference type="AGR" id="WB:WBGene00003547"/>
<dbReference type="CTD" id="186488"/>
<dbReference type="WormBase" id="F58A6.4">
    <property type="protein sequence ID" value="CE42691"/>
    <property type="gene ID" value="WBGene00003547"/>
    <property type="gene designation" value="nas-29"/>
</dbReference>
<dbReference type="eggNOG" id="KOG3714">
    <property type="taxonomic scope" value="Eukaryota"/>
</dbReference>
<dbReference type="GeneTree" id="ENSGT00940000169152"/>
<dbReference type="HOGENOM" id="CLU_017286_1_5_1"/>
<dbReference type="InParanoid" id="Q20958"/>
<dbReference type="OMA" id="NYPATIW"/>
<dbReference type="OrthoDB" id="291007at2759"/>
<dbReference type="PhylomeDB" id="Q20958"/>
<dbReference type="PRO" id="PR:Q20958"/>
<dbReference type="Proteomes" id="UP000001940">
    <property type="component" value="Chromosome II"/>
</dbReference>
<dbReference type="Bgee" id="WBGene00003547">
    <property type="expression patterns" value="Expressed in larva and 2 other cell types or tissues"/>
</dbReference>
<dbReference type="GO" id="GO:0005576">
    <property type="term" value="C:extracellular region"/>
    <property type="evidence" value="ECO:0007669"/>
    <property type="project" value="UniProtKB-SubCell"/>
</dbReference>
<dbReference type="GO" id="GO:0004222">
    <property type="term" value="F:metalloendopeptidase activity"/>
    <property type="evidence" value="ECO:0000318"/>
    <property type="project" value="GO_Central"/>
</dbReference>
<dbReference type="GO" id="GO:0008270">
    <property type="term" value="F:zinc ion binding"/>
    <property type="evidence" value="ECO:0007669"/>
    <property type="project" value="InterPro"/>
</dbReference>
<dbReference type="GO" id="GO:0018996">
    <property type="term" value="P:molting cycle, collagen and cuticulin-based cuticle"/>
    <property type="evidence" value="ECO:0007669"/>
    <property type="project" value="InterPro"/>
</dbReference>
<dbReference type="GO" id="GO:0006508">
    <property type="term" value="P:proteolysis"/>
    <property type="evidence" value="ECO:0007669"/>
    <property type="project" value="UniProtKB-KW"/>
</dbReference>
<dbReference type="CDD" id="cd00041">
    <property type="entry name" value="CUB"/>
    <property type="match status" value="1"/>
</dbReference>
<dbReference type="CDD" id="cd04280">
    <property type="entry name" value="ZnMc_astacin_like"/>
    <property type="match status" value="1"/>
</dbReference>
<dbReference type="FunFam" id="3.40.390.10:FF:000073">
    <property type="entry name" value="Zinc metalloproteinase"/>
    <property type="match status" value="1"/>
</dbReference>
<dbReference type="Gene3D" id="3.40.390.10">
    <property type="entry name" value="Collagenase (Catalytic Domain)"/>
    <property type="match status" value="1"/>
</dbReference>
<dbReference type="Gene3D" id="2.60.120.290">
    <property type="entry name" value="Spermadhesin, CUB domain"/>
    <property type="match status" value="1"/>
</dbReference>
<dbReference type="InterPro" id="IPR034035">
    <property type="entry name" value="Astacin-like_dom"/>
</dbReference>
<dbReference type="InterPro" id="IPR000859">
    <property type="entry name" value="CUB_dom"/>
</dbReference>
<dbReference type="InterPro" id="IPR000742">
    <property type="entry name" value="EGF-like_dom"/>
</dbReference>
<dbReference type="InterPro" id="IPR024079">
    <property type="entry name" value="MetalloPept_cat_dom_sf"/>
</dbReference>
<dbReference type="InterPro" id="IPR017050">
    <property type="entry name" value="Metallopeptidase_nem"/>
</dbReference>
<dbReference type="InterPro" id="IPR001506">
    <property type="entry name" value="Peptidase_M12A"/>
</dbReference>
<dbReference type="InterPro" id="IPR006026">
    <property type="entry name" value="Peptidase_Metallo"/>
</dbReference>
<dbReference type="InterPro" id="IPR035914">
    <property type="entry name" value="Sperma_CUB_dom_sf"/>
</dbReference>
<dbReference type="PANTHER" id="PTHR10127">
    <property type="entry name" value="DISCOIDIN, CUB, EGF, LAMININ , AND ZINC METALLOPROTEASE DOMAIN CONTAINING"/>
    <property type="match status" value="1"/>
</dbReference>
<dbReference type="PANTHER" id="PTHR10127:SF891">
    <property type="entry name" value="ZINC METALLOPROTEINASE NAS-29"/>
    <property type="match status" value="1"/>
</dbReference>
<dbReference type="Pfam" id="PF01400">
    <property type="entry name" value="Astacin"/>
    <property type="match status" value="1"/>
</dbReference>
<dbReference type="Pfam" id="PF00431">
    <property type="entry name" value="CUB"/>
    <property type="match status" value="1"/>
</dbReference>
<dbReference type="PIRSF" id="PIRSF036365">
    <property type="entry name" value="Astacin_nematoda"/>
    <property type="match status" value="1"/>
</dbReference>
<dbReference type="PRINTS" id="PR00480">
    <property type="entry name" value="ASTACIN"/>
</dbReference>
<dbReference type="SMART" id="SM00042">
    <property type="entry name" value="CUB"/>
    <property type="match status" value="1"/>
</dbReference>
<dbReference type="SMART" id="SM00235">
    <property type="entry name" value="ZnMc"/>
    <property type="match status" value="1"/>
</dbReference>
<dbReference type="SUPFAM" id="SSF55486">
    <property type="entry name" value="Metalloproteases ('zincins'), catalytic domain"/>
    <property type="match status" value="1"/>
</dbReference>
<dbReference type="SUPFAM" id="SSF49854">
    <property type="entry name" value="Spermadhesin, CUB domain"/>
    <property type="match status" value="1"/>
</dbReference>
<dbReference type="PROSITE" id="PS51864">
    <property type="entry name" value="ASTACIN"/>
    <property type="match status" value="1"/>
</dbReference>
<dbReference type="PROSITE" id="PS01180">
    <property type="entry name" value="CUB"/>
    <property type="match status" value="1"/>
</dbReference>
<dbReference type="PROSITE" id="PS00022">
    <property type="entry name" value="EGF_1"/>
    <property type="match status" value="1"/>
</dbReference>
<dbReference type="PROSITE" id="PS01186">
    <property type="entry name" value="EGF_2"/>
    <property type="match status" value="1"/>
</dbReference>
<dbReference type="PROSITE" id="PS00142">
    <property type="entry name" value="ZINC_PROTEASE"/>
    <property type="match status" value="1"/>
</dbReference>
<sequence length="532" mass="60395">MISKNTSFCGFLILVLATCMSAQFVSNESIKLHDILKPSATHRLFDTLQYSVEEQYSDSHLSFDVSTIYNYSEKPISIGKLNKKYRDILFEGDMAISYKQLSMIVNGSTEYRKAIKSRRRGNKINGESTDRTKRQAYLDNNYPATIWKNGVAFMFHESLTPIAKTAILKAVHFWYRETCIEFHPRTFQKEYLLFIGNDDGCWSTVGRDASQGKQVVSIGNGCEHFGVTSHELAHALGIFHEQSRFDRDESVVFNPRVVERDLLFNFAKISPRQMSTYGLPYDIGSVMHYTPTEFSNIPSIPTLAAIDTNLQQTMGQLEGPSFVDVHIMNQHYQCQEKCPTQAPCQNGGFTNSRNCKVCKCPTGFGGAYCQLIASSFSPFCGGYLNAEETTRRFDITIRQSTTTRSKTCVYHIKAPEGKRIIIDILKIDSKCIEGCWQDGLELKMKKDFRPVGYRFCCPESSRRKVISEGNMVPFMVFSKEHDFSVSFEYSFVSTSAGFDDEKNDSDVIVDNLDGVFVSDTSLLQRIGFRRQL</sequence>
<name>NAS29_CAEEL</name>
<protein>
    <recommendedName>
        <fullName>Zinc metalloproteinase nas-29</fullName>
        <ecNumber evidence="1">3.4.24.-</ecNumber>
    </recommendedName>
    <alternativeName>
        <fullName>Nematode astacin 29</fullName>
    </alternativeName>
</protein>
<organism>
    <name type="scientific">Caenorhabditis elegans</name>
    <dbReference type="NCBI Taxonomy" id="6239"/>
    <lineage>
        <taxon>Eukaryota</taxon>
        <taxon>Metazoa</taxon>
        <taxon>Ecdysozoa</taxon>
        <taxon>Nematoda</taxon>
        <taxon>Chromadorea</taxon>
        <taxon>Rhabditida</taxon>
        <taxon>Rhabditina</taxon>
        <taxon>Rhabditomorpha</taxon>
        <taxon>Rhabditoidea</taxon>
        <taxon>Rhabditidae</taxon>
        <taxon>Peloderinae</taxon>
        <taxon>Caenorhabditis</taxon>
    </lineage>
</organism>
<gene>
    <name type="primary">nas-29</name>
    <name type="ORF">F58A6.4</name>
</gene>
<accession>Q20958</accession>
<accession>Q7Z0M3</accession>
<feature type="signal peptide" evidence="3">
    <location>
        <begin position="1"/>
        <end position="22"/>
    </location>
</feature>
<feature type="propeptide" id="PRO_0000442676" evidence="2">
    <location>
        <begin position="23"/>
        <end position="134"/>
    </location>
</feature>
<feature type="chain" id="PRO_0000028933" description="Zinc metalloproteinase nas-29">
    <location>
        <begin position="135"/>
        <end position="532"/>
    </location>
</feature>
<feature type="domain" description="Peptidase M12A" evidence="5">
    <location>
        <begin position="135"/>
        <end position="335"/>
    </location>
</feature>
<feature type="domain" description="EGF-like">
    <location>
        <begin position="330"/>
        <end position="370"/>
    </location>
</feature>
<feature type="domain" description="CUB" evidence="4">
    <location>
        <begin position="380"/>
        <end position="494"/>
    </location>
</feature>
<feature type="active site" evidence="5">
    <location>
        <position position="231"/>
    </location>
</feature>
<feature type="binding site" evidence="5">
    <location>
        <position position="230"/>
    </location>
    <ligand>
        <name>Zn(2+)</name>
        <dbReference type="ChEBI" id="CHEBI:29105"/>
        <note>catalytic</note>
    </ligand>
</feature>
<feature type="binding site" evidence="5">
    <location>
        <position position="234"/>
    </location>
    <ligand>
        <name>Zn(2+)</name>
        <dbReference type="ChEBI" id="CHEBI:29105"/>
        <note>catalytic</note>
    </ligand>
</feature>
<feature type="binding site" evidence="5">
    <location>
        <position position="240"/>
    </location>
    <ligand>
        <name>Zn(2+)</name>
        <dbReference type="ChEBI" id="CHEBI:29105"/>
        <note>catalytic</note>
    </ligand>
</feature>
<feature type="glycosylation site" description="N-linked (GlcNAc...) asparagine" evidence="3">
    <location>
        <position position="5"/>
    </location>
</feature>
<feature type="glycosylation site" description="N-linked (GlcNAc...) asparagine" evidence="3">
    <location>
        <position position="27"/>
    </location>
</feature>
<feature type="glycosylation site" description="N-linked (GlcNAc...) asparagine" evidence="3">
    <location>
        <position position="70"/>
    </location>
</feature>
<feature type="glycosylation site" description="N-linked (GlcNAc...) asparagine" evidence="3">
    <location>
        <position position="106"/>
    </location>
</feature>
<feature type="glycosylation site" description="N-linked (GlcNAc...) asparagine" evidence="3">
    <location>
        <position position="503"/>
    </location>
</feature>
<feature type="disulfide bond" evidence="5">
    <location>
        <begin position="179"/>
        <end position="334"/>
    </location>
</feature>
<feature type="disulfide bond" evidence="5">
    <location>
        <begin position="201"/>
        <end position="222"/>
    </location>
</feature>
<feature type="disulfide bond" evidence="4">
    <location>
        <begin position="338"/>
        <end position="358"/>
    </location>
</feature>
<feature type="disulfide bond" evidence="4">
    <location>
        <begin position="360"/>
        <end position="369"/>
    </location>
</feature>
<feature type="disulfide bond" evidence="4">
    <location>
        <begin position="380"/>
        <end position="408"/>
    </location>
</feature>
<feature type="disulfide bond" evidence="4">
    <location>
        <begin position="435"/>
        <end position="456"/>
    </location>
</feature>
<keyword id="KW-0165">Cleavage on pair of basic residues</keyword>
<keyword id="KW-1015">Disulfide bond</keyword>
<keyword id="KW-0245">EGF-like domain</keyword>
<keyword id="KW-0325">Glycoprotein</keyword>
<keyword id="KW-0378">Hydrolase</keyword>
<keyword id="KW-0479">Metal-binding</keyword>
<keyword id="KW-0482">Metalloprotease</keyword>
<keyword id="KW-0645">Protease</keyword>
<keyword id="KW-1185">Reference proteome</keyword>
<keyword id="KW-0964">Secreted</keyword>
<keyword id="KW-0732">Signal</keyword>
<keyword id="KW-0862">Zinc</keyword>
<keyword id="KW-0865">Zymogen</keyword>
<reference key="1">
    <citation type="journal article" date="1998" name="Science">
        <title>Genome sequence of the nematode C. elegans: a platform for investigating biology.</title>
        <authorList>
            <consortium name="The C. elegans sequencing consortium"/>
        </authorList>
    </citation>
    <scope>NUCLEOTIDE SEQUENCE [LARGE SCALE GENOMIC DNA]</scope>
    <source>
        <strain>Bristol N2</strain>
    </source>
</reference>
<reference key="2">
    <citation type="journal article" date="2003" name="Eur. J. Biochem.">
        <title>The astacin protein family in Caenorhabditis elegans.</title>
        <authorList>
            <person name="Moehrlen F."/>
            <person name="Hutter H."/>
            <person name="Zwilling R."/>
        </authorList>
    </citation>
    <scope>NUCLEOTIDE SEQUENCE [MRNA] OF 197-286</scope>
    <scope>GENE STRUCTURE</scope>
    <scope>NOMENCLATURE</scope>
    <source>
        <strain>Bristol N2</strain>
    </source>
</reference>